<dbReference type="EMBL" id="CP000247">
    <property type="protein sequence ID" value="ABG72424.1"/>
    <property type="molecule type" value="Genomic_DNA"/>
</dbReference>
<dbReference type="SMR" id="Q0T9F5"/>
<dbReference type="KEGG" id="ecp:ECP_4483"/>
<dbReference type="HOGENOM" id="CLU_106757_2_0_6"/>
<dbReference type="Proteomes" id="UP000009182">
    <property type="component" value="Chromosome"/>
</dbReference>
<dbReference type="GO" id="GO:0005829">
    <property type="term" value="C:cytosol"/>
    <property type="evidence" value="ECO:0007669"/>
    <property type="project" value="TreeGrafter"/>
</dbReference>
<dbReference type="GO" id="GO:0043022">
    <property type="term" value="F:ribosome binding"/>
    <property type="evidence" value="ECO:0007669"/>
    <property type="project" value="UniProtKB-UniRule"/>
</dbReference>
<dbReference type="GO" id="GO:0019843">
    <property type="term" value="F:rRNA binding"/>
    <property type="evidence" value="ECO:0007669"/>
    <property type="project" value="UniProtKB-UniRule"/>
</dbReference>
<dbReference type="GO" id="GO:1902626">
    <property type="term" value="P:assembly of large subunit precursor of preribosome"/>
    <property type="evidence" value="ECO:0007669"/>
    <property type="project" value="UniProtKB-UniRule"/>
</dbReference>
<dbReference type="CDD" id="cd16331">
    <property type="entry name" value="YjgA-like"/>
    <property type="match status" value="1"/>
</dbReference>
<dbReference type="FunFam" id="1.10.60.30:FF:000001">
    <property type="entry name" value="UPF0307 protein YjgA"/>
    <property type="match status" value="1"/>
</dbReference>
<dbReference type="FunFam" id="1.10.60.30:FF:000002">
    <property type="entry name" value="UPF0307 protein YjgA"/>
    <property type="match status" value="1"/>
</dbReference>
<dbReference type="Gene3D" id="1.10.60.30">
    <property type="entry name" value="PSPTO4464-like domains"/>
    <property type="match status" value="2"/>
</dbReference>
<dbReference type="HAMAP" id="MF_00765">
    <property type="entry name" value="DarP"/>
    <property type="match status" value="1"/>
</dbReference>
<dbReference type="InterPro" id="IPR006839">
    <property type="entry name" value="DarP"/>
</dbReference>
<dbReference type="InterPro" id="IPR023153">
    <property type="entry name" value="DarP_sf"/>
</dbReference>
<dbReference type="NCBIfam" id="NF003593">
    <property type="entry name" value="PRK05255.1-1"/>
    <property type="match status" value="1"/>
</dbReference>
<dbReference type="PANTHER" id="PTHR38101">
    <property type="entry name" value="UPF0307 PROTEIN YJGA"/>
    <property type="match status" value="1"/>
</dbReference>
<dbReference type="PANTHER" id="PTHR38101:SF1">
    <property type="entry name" value="UPF0307 PROTEIN YJGA"/>
    <property type="match status" value="1"/>
</dbReference>
<dbReference type="Pfam" id="PF04751">
    <property type="entry name" value="DarP"/>
    <property type="match status" value="1"/>
</dbReference>
<dbReference type="PIRSF" id="PIRSF016183">
    <property type="entry name" value="UCP016183"/>
    <property type="match status" value="1"/>
</dbReference>
<dbReference type="SUPFAM" id="SSF158710">
    <property type="entry name" value="PSPTO4464-like"/>
    <property type="match status" value="1"/>
</dbReference>
<feature type="chain" id="PRO_0000257628" description="Dual-action ribosomal maturation protein DarP">
    <location>
        <begin position="1"/>
        <end position="183"/>
    </location>
</feature>
<evidence type="ECO:0000255" key="1">
    <source>
        <dbReference type="HAMAP-Rule" id="MF_00765"/>
    </source>
</evidence>
<keyword id="KW-0963">Cytoplasm</keyword>
<keyword id="KW-0690">Ribosome biogenesis</keyword>
<keyword id="KW-0694">RNA-binding</keyword>
<keyword id="KW-0699">rRNA-binding</keyword>
<protein>
    <recommendedName>
        <fullName evidence="1">Dual-action ribosomal maturation protein DarP</fullName>
    </recommendedName>
    <alternativeName>
        <fullName evidence="1">Large ribosomal subunit assembly factor DarP</fullName>
    </alternativeName>
</protein>
<reference key="1">
    <citation type="journal article" date="2006" name="Mol. Microbiol.">
        <title>Role of pathogenicity island-associated integrases in the genome plasticity of uropathogenic Escherichia coli strain 536.</title>
        <authorList>
            <person name="Hochhut B."/>
            <person name="Wilde C."/>
            <person name="Balling G."/>
            <person name="Middendorf B."/>
            <person name="Dobrindt U."/>
            <person name="Brzuszkiewicz E."/>
            <person name="Gottschalk G."/>
            <person name="Carniel E."/>
            <person name="Hacker J."/>
        </authorList>
    </citation>
    <scope>NUCLEOTIDE SEQUENCE [LARGE SCALE GENOMIC DNA]</scope>
    <source>
        <strain>536 / UPEC</strain>
    </source>
</reference>
<accession>Q0T9F5</accession>
<sequence length="183" mass="21359">MTKQPEDWLDDVPGDDIEDEDDEIIWVSKSEIKRDAEELKRLGAEIVDLGKNALDKIPLDADLRAAIELAQRIKMEGRRRQLQLIGKMLRQRDVEPIRQALDKLKNRHNQQVVLFHKLENLRDRLIDQGDDAIAEVLNLWPDADRQQLRTLIRNAKKEKEGNKPPKSARQIFQYLRELAENEG</sequence>
<comment type="function">
    <text evidence="1">Member of a network of 50S ribosomal subunit biogenesis factors which assembles along the 30S-50S interface, preventing incorrect 23S rRNA structures from forming. Promotes peptidyl transferase center (PTC) maturation.</text>
</comment>
<comment type="subcellular location">
    <subcellularLocation>
        <location evidence="1">Cytoplasm</location>
    </subcellularLocation>
    <text evidence="1">Associates with late stage pre-50S ribosomal subunits.</text>
</comment>
<comment type="similarity">
    <text evidence="1">Belongs to the DarP family.</text>
</comment>
<gene>
    <name evidence="1" type="primary">darP</name>
    <name type="ordered locus">ECP_4483</name>
</gene>
<organism>
    <name type="scientific">Escherichia coli O6:K15:H31 (strain 536 / UPEC)</name>
    <dbReference type="NCBI Taxonomy" id="362663"/>
    <lineage>
        <taxon>Bacteria</taxon>
        <taxon>Pseudomonadati</taxon>
        <taxon>Pseudomonadota</taxon>
        <taxon>Gammaproteobacteria</taxon>
        <taxon>Enterobacterales</taxon>
        <taxon>Enterobacteriaceae</taxon>
        <taxon>Escherichia</taxon>
    </lineage>
</organism>
<proteinExistence type="inferred from homology"/>
<name>DARP_ECOL5</name>